<organism>
    <name type="scientific">Shewanella sp. (strain MR-4)</name>
    <dbReference type="NCBI Taxonomy" id="60480"/>
    <lineage>
        <taxon>Bacteria</taxon>
        <taxon>Pseudomonadati</taxon>
        <taxon>Pseudomonadota</taxon>
        <taxon>Gammaproteobacteria</taxon>
        <taxon>Alteromonadales</taxon>
        <taxon>Shewanellaceae</taxon>
        <taxon>Shewanella</taxon>
    </lineage>
</organism>
<proteinExistence type="inferred from homology"/>
<reference key="1">
    <citation type="submission" date="2006-08" db="EMBL/GenBank/DDBJ databases">
        <title>Complete sequence of Shewanella sp. MR-4.</title>
        <authorList>
            <consortium name="US DOE Joint Genome Institute"/>
            <person name="Copeland A."/>
            <person name="Lucas S."/>
            <person name="Lapidus A."/>
            <person name="Barry K."/>
            <person name="Detter J.C."/>
            <person name="Glavina del Rio T."/>
            <person name="Hammon N."/>
            <person name="Israni S."/>
            <person name="Dalin E."/>
            <person name="Tice H."/>
            <person name="Pitluck S."/>
            <person name="Kiss H."/>
            <person name="Brettin T."/>
            <person name="Bruce D."/>
            <person name="Han C."/>
            <person name="Tapia R."/>
            <person name="Gilna P."/>
            <person name="Schmutz J."/>
            <person name="Larimer F."/>
            <person name="Land M."/>
            <person name="Hauser L."/>
            <person name="Kyrpides N."/>
            <person name="Mikhailova N."/>
            <person name="Nealson K."/>
            <person name="Konstantinidis K."/>
            <person name="Klappenbach J."/>
            <person name="Tiedje J."/>
            <person name="Richardson P."/>
        </authorList>
    </citation>
    <scope>NUCLEOTIDE SEQUENCE [LARGE SCALE GENOMIC DNA]</scope>
    <source>
        <strain>MR-4</strain>
    </source>
</reference>
<accession>Q0HES2</accession>
<sequence length="739" mass="81223">MKKTTIPTLSALTLAMSLAFGGAAIAQEQVTGNQFWWPEQLNLSPLRQNAVESNPYGSDYHYAEAFKSLDLDAVKKDIKALMTESQDWWPADYGHYGPFFIRMAWHSAGVYRIFDGRGGAAGGQQRFEPLNSWPDNVNLDKARRLLWPIKQKYGSKISWGDLMVFTGNVALESMGFKTFGFAGGRVDDWEAEQVNWGSEKAWLDSKRRNEKGELAKPMGATQMGLIYVNPEGPNGVPDPLASAKEIRDTFGRMAMNDEETVALIAGGHTFGKAHGAHDPSKCVGADPAASGVEAQGLGWKNKCGKGHSEDTVTSGLEGAWSSNPTKWTMEYLTWLYTFDWVQTKSPAGHIQWIPADGKAANLIPDAHIADKRHAPMMFTSDIALKEDPIYREITTRFLKNPQEFELAFAKAWFKLTHRDMGPKARYLGADVPAEMLIWQDPIPALDHLVIDNADIKALGNKILASGLTVPELVRTAWASASSFRGTDMRGGANGARIRLEPMMNWQANNPKELAKVLAKLEKVQKDFNGSLKGGKKVSLADVIVLGGSVAVEKAAKEAGVAVSVPFTPGRMDATQAQTDVSSFAVLEPTADGFRNYYSKDSSHSPAEMLIERANMLNLTVPEMTVLVGGLRALDANSAGVKHGVFTDKPGTLSNDFFVNLLDMSTKWSKSEKQEGIYEGQDRKSGKLKWTATPVDLVFGSHSELRAVSEVYGAQDGQDRFVQDFIKAWNKVMNADRFDI</sequence>
<dbReference type="EC" id="1.11.1.21" evidence="1"/>
<dbReference type="EMBL" id="CP000446">
    <property type="protein sequence ID" value="ABI40445.1"/>
    <property type="molecule type" value="Genomic_DNA"/>
</dbReference>
<dbReference type="RefSeq" id="WP_011624112.1">
    <property type="nucleotide sequence ID" value="NC_008321.1"/>
</dbReference>
<dbReference type="SMR" id="Q0HES2"/>
<dbReference type="PeroxiBase" id="3614">
    <property type="entry name" value="SHspCP01_MR-4"/>
</dbReference>
<dbReference type="KEGG" id="she:Shewmr4_3379"/>
<dbReference type="HOGENOM" id="CLU_025424_2_0_6"/>
<dbReference type="GO" id="GO:0005829">
    <property type="term" value="C:cytosol"/>
    <property type="evidence" value="ECO:0007669"/>
    <property type="project" value="TreeGrafter"/>
</dbReference>
<dbReference type="GO" id="GO:0004096">
    <property type="term" value="F:catalase activity"/>
    <property type="evidence" value="ECO:0007669"/>
    <property type="project" value="UniProtKB-UniRule"/>
</dbReference>
<dbReference type="GO" id="GO:0020037">
    <property type="term" value="F:heme binding"/>
    <property type="evidence" value="ECO:0007669"/>
    <property type="project" value="InterPro"/>
</dbReference>
<dbReference type="GO" id="GO:0046872">
    <property type="term" value="F:metal ion binding"/>
    <property type="evidence" value="ECO:0007669"/>
    <property type="project" value="UniProtKB-KW"/>
</dbReference>
<dbReference type="GO" id="GO:0070301">
    <property type="term" value="P:cellular response to hydrogen peroxide"/>
    <property type="evidence" value="ECO:0007669"/>
    <property type="project" value="TreeGrafter"/>
</dbReference>
<dbReference type="GO" id="GO:0042744">
    <property type="term" value="P:hydrogen peroxide catabolic process"/>
    <property type="evidence" value="ECO:0007669"/>
    <property type="project" value="UniProtKB-KW"/>
</dbReference>
<dbReference type="CDD" id="cd00649">
    <property type="entry name" value="catalase_peroxidase_1"/>
    <property type="match status" value="1"/>
</dbReference>
<dbReference type="CDD" id="cd08200">
    <property type="entry name" value="catalase_peroxidase_2"/>
    <property type="match status" value="1"/>
</dbReference>
<dbReference type="FunFam" id="1.10.420.10:FF:000004">
    <property type="entry name" value="Catalase-peroxidase"/>
    <property type="match status" value="1"/>
</dbReference>
<dbReference type="FunFam" id="1.10.520.10:FF:000002">
    <property type="entry name" value="Catalase-peroxidase"/>
    <property type="match status" value="1"/>
</dbReference>
<dbReference type="Gene3D" id="1.10.520.10">
    <property type="match status" value="2"/>
</dbReference>
<dbReference type="Gene3D" id="1.10.420.10">
    <property type="entry name" value="Peroxidase, domain 2"/>
    <property type="match status" value="2"/>
</dbReference>
<dbReference type="HAMAP" id="MF_01961">
    <property type="entry name" value="Catal_peroxid"/>
    <property type="match status" value="1"/>
</dbReference>
<dbReference type="InterPro" id="IPR000763">
    <property type="entry name" value="Catalase_peroxidase"/>
</dbReference>
<dbReference type="InterPro" id="IPR002016">
    <property type="entry name" value="Haem_peroxidase"/>
</dbReference>
<dbReference type="InterPro" id="IPR010255">
    <property type="entry name" value="Haem_peroxidase_sf"/>
</dbReference>
<dbReference type="InterPro" id="IPR019794">
    <property type="entry name" value="Peroxidases_AS"/>
</dbReference>
<dbReference type="InterPro" id="IPR019793">
    <property type="entry name" value="Peroxidases_heam-ligand_BS"/>
</dbReference>
<dbReference type="NCBIfam" id="TIGR00198">
    <property type="entry name" value="cat_per_HPI"/>
    <property type="match status" value="1"/>
</dbReference>
<dbReference type="NCBIfam" id="NF011635">
    <property type="entry name" value="PRK15061.1"/>
    <property type="match status" value="1"/>
</dbReference>
<dbReference type="PANTHER" id="PTHR30555:SF0">
    <property type="entry name" value="CATALASE-PEROXIDASE"/>
    <property type="match status" value="1"/>
</dbReference>
<dbReference type="PANTHER" id="PTHR30555">
    <property type="entry name" value="HYDROPEROXIDASE I, BIFUNCTIONAL CATALASE-PEROXIDASE"/>
    <property type="match status" value="1"/>
</dbReference>
<dbReference type="Pfam" id="PF00141">
    <property type="entry name" value="peroxidase"/>
    <property type="match status" value="2"/>
</dbReference>
<dbReference type="PRINTS" id="PR00460">
    <property type="entry name" value="BPEROXIDASE"/>
</dbReference>
<dbReference type="PRINTS" id="PR00458">
    <property type="entry name" value="PEROXIDASE"/>
</dbReference>
<dbReference type="SUPFAM" id="SSF48113">
    <property type="entry name" value="Heme-dependent peroxidases"/>
    <property type="match status" value="2"/>
</dbReference>
<dbReference type="PROSITE" id="PS00435">
    <property type="entry name" value="PEROXIDASE_1"/>
    <property type="match status" value="1"/>
</dbReference>
<dbReference type="PROSITE" id="PS00436">
    <property type="entry name" value="PEROXIDASE_2"/>
    <property type="match status" value="1"/>
</dbReference>
<dbReference type="PROSITE" id="PS50873">
    <property type="entry name" value="PEROXIDASE_4"/>
    <property type="match status" value="1"/>
</dbReference>
<protein>
    <recommendedName>
        <fullName evidence="1">Catalase-peroxidase 2</fullName>
        <shortName evidence="1">CP 2</shortName>
        <ecNumber evidence="1">1.11.1.21</ecNumber>
    </recommendedName>
    <alternativeName>
        <fullName evidence="1">Peroxidase/catalase 2</fullName>
    </alternativeName>
</protein>
<name>KATG2_SHESM</name>
<comment type="function">
    <text evidence="1">Bifunctional enzyme with both catalase and broad-spectrum peroxidase activity.</text>
</comment>
<comment type="catalytic activity">
    <reaction evidence="1">
        <text>H2O2 + AH2 = A + 2 H2O</text>
        <dbReference type="Rhea" id="RHEA:30275"/>
        <dbReference type="ChEBI" id="CHEBI:13193"/>
        <dbReference type="ChEBI" id="CHEBI:15377"/>
        <dbReference type="ChEBI" id="CHEBI:16240"/>
        <dbReference type="ChEBI" id="CHEBI:17499"/>
        <dbReference type="EC" id="1.11.1.21"/>
    </reaction>
</comment>
<comment type="catalytic activity">
    <reaction evidence="1">
        <text>2 H2O2 = O2 + 2 H2O</text>
        <dbReference type="Rhea" id="RHEA:20309"/>
        <dbReference type="ChEBI" id="CHEBI:15377"/>
        <dbReference type="ChEBI" id="CHEBI:15379"/>
        <dbReference type="ChEBI" id="CHEBI:16240"/>
        <dbReference type="EC" id="1.11.1.21"/>
    </reaction>
</comment>
<comment type="cofactor">
    <cofactor evidence="1">
        <name>heme b</name>
        <dbReference type="ChEBI" id="CHEBI:60344"/>
    </cofactor>
    <text evidence="1">Binds 1 heme b (iron(II)-protoporphyrin IX) group per dimer.</text>
</comment>
<comment type="subunit">
    <text evidence="1">Homodimer or homotetramer.</text>
</comment>
<comment type="PTM">
    <text evidence="1">Formation of the three residue Trp-Tyr-Met cross-link is important for the catalase, but not the peroxidase activity of the enzyme.</text>
</comment>
<comment type="similarity">
    <text evidence="1">Belongs to the peroxidase family. Peroxidase/catalase subfamily.</text>
</comment>
<feature type="signal peptide" evidence="1">
    <location>
        <begin position="1"/>
        <end position="26"/>
    </location>
</feature>
<feature type="chain" id="PRO_5000130194" description="Catalase-peroxidase 2">
    <location>
        <begin position="27"/>
        <end position="739"/>
    </location>
</feature>
<feature type="active site" description="Proton acceptor" evidence="1">
    <location>
        <position position="106"/>
    </location>
</feature>
<feature type="binding site" description="axial binding residue" evidence="1">
    <location>
        <position position="268"/>
    </location>
    <ligand>
        <name>heme b</name>
        <dbReference type="ChEBI" id="CHEBI:60344"/>
    </ligand>
    <ligandPart>
        <name>Fe</name>
        <dbReference type="ChEBI" id="CHEBI:18248"/>
    </ligandPart>
</feature>
<feature type="site" description="Transition state stabilizer" evidence="1">
    <location>
        <position position="102"/>
    </location>
</feature>
<feature type="cross-link" description="Tryptophyl-tyrosyl-methioninium (Trp-Tyr) (with M-253)" evidence="1">
    <location>
        <begin position="105"/>
        <end position="227"/>
    </location>
</feature>
<feature type="cross-link" description="Tryptophyl-tyrosyl-methioninium (Tyr-Met) (with W-105)" evidence="1">
    <location>
        <begin position="227"/>
        <end position="253"/>
    </location>
</feature>
<gene>
    <name evidence="1" type="primary">katG2</name>
    <name type="ordered locus">Shewmr4_3379</name>
</gene>
<keyword id="KW-0349">Heme</keyword>
<keyword id="KW-0376">Hydrogen peroxide</keyword>
<keyword id="KW-0408">Iron</keyword>
<keyword id="KW-0479">Metal-binding</keyword>
<keyword id="KW-0560">Oxidoreductase</keyword>
<keyword id="KW-0575">Peroxidase</keyword>
<keyword id="KW-0732">Signal</keyword>
<evidence type="ECO:0000255" key="1">
    <source>
        <dbReference type="HAMAP-Rule" id="MF_01961"/>
    </source>
</evidence>